<keyword id="KW-1003">Cell membrane</keyword>
<keyword id="KW-0472">Membrane</keyword>
<keyword id="KW-1185">Reference proteome</keyword>
<keyword id="KW-0812">Transmembrane</keyword>
<keyword id="KW-1133">Transmembrane helix</keyword>
<evidence type="ECO:0000255" key="1">
    <source>
        <dbReference type="HAMAP-Rule" id="MF_01600"/>
    </source>
</evidence>
<evidence type="ECO:0000256" key="2">
    <source>
        <dbReference type="SAM" id="MobiDB-lite"/>
    </source>
</evidence>
<protein>
    <recommendedName>
        <fullName evidence="1">UPF0182 protein CA_C0010</fullName>
    </recommendedName>
</protein>
<sequence>MKKKVTIVTIILFLLVIVGSFGKVTDFIINLEWFKEIGYTSVYFTKLAAILKLMIPIFIIIYTGLWFYYKSIRKIIIKWNKVVEVNVKTEKLKKRVAIVIDVIASFFVAYFTSSVYWYRILQFTSGNSFNIKDPIFNLDVSFYVFRLPLIESLYGVMLLFLIFMAVLTVILYIVLSLRDRVYNRNIGGINISFKEFFKGLSDFAGRQFAIISGLIMFLVAVGYAIRSFNLVYSPRGVVYGGGYTDIHVSLVFYVIIIAAAIVSSVVIFTSIIKYKIKPIFVSIVAILILIIGQSITAEIVQNLIVKSNEKNLEAPYIKNNIEYTRKAFNIDKLSESNFPSSDSLTQADIDSNRDTVNNIKVNSVTPALEFYNQVQVVRYYYDFRDLDVDRYNIGGKYSEVFLAPREIDSKSLEGNADTWQNRHLIYTHGYGLVMSKVNSVTSEGQPNFVIKDIPPQNSTNLKITNPRIYYGEETDDYAIANNTLGEFDYPDGSKNKTNNYDGKGGIKANILNRLIFAINKRDSNFLLSENITSNSKILINRNIMDRLNKIAPFLSYDKDPYVVLSGGKLFWIVDAYTTSDRFPYSQPYNNVNYIRNSVKVVIDAVDGTTNFYIVDKNDPIANSYSKIFPGLFKDVSQVPKDIRSHFKYPEDLFSTQCNVLGKYHVTDTGVFYNSEDLWETAKNQKQINGEKGVNDASYFIMRLPGENKSEMVLMEYFNMKDKDNMSAIFGARMDGNNYGKLILYKLPTDKTVYSPYLFKQKLNQDPSISKEVSLWNTQGSSVQFGDTSIIPIKNSLLYVEPVYLRAQGKNSMPEVKRVIVSFGNKMVMANSIDEALNQIFNNSSNNQSETRTETGGTSTDSSNNKDKLKQAQDLYNQAVDAQKNGDWSKYGDYINKLGKTLDELNK</sequence>
<proteinExistence type="inferred from homology"/>
<reference key="1">
    <citation type="journal article" date="2001" name="J. Bacteriol.">
        <title>Genome sequence and comparative analysis of the solvent-producing bacterium Clostridium acetobutylicum.</title>
        <authorList>
            <person name="Noelling J."/>
            <person name="Breton G."/>
            <person name="Omelchenko M.V."/>
            <person name="Makarova K.S."/>
            <person name="Zeng Q."/>
            <person name="Gibson R."/>
            <person name="Lee H.M."/>
            <person name="Dubois J."/>
            <person name="Qiu D."/>
            <person name="Hitti J."/>
            <person name="Wolf Y.I."/>
            <person name="Tatusov R.L."/>
            <person name="Sabathe F."/>
            <person name="Doucette-Stamm L.A."/>
            <person name="Soucaille P."/>
            <person name="Daly M.J."/>
            <person name="Bennett G.N."/>
            <person name="Koonin E.V."/>
            <person name="Smith D.R."/>
        </authorList>
    </citation>
    <scope>NUCLEOTIDE SEQUENCE [LARGE SCALE GENOMIC DNA]</scope>
    <source>
        <strain>ATCC 824 / DSM 792 / JCM 1419 / IAM 19013 / LMG 5710 / NBRC 13948 / NRRL B-527 / VKM B-1787 / 2291 / W</strain>
    </source>
</reference>
<accession>Q97N28</accession>
<organism>
    <name type="scientific">Clostridium acetobutylicum (strain ATCC 824 / DSM 792 / JCM 1419 / IAM 19013 / LMG 5710 / NBRC 13948 / NRRL B-527 / VKM B-1787 / 2291 / W)</name>
    <dbReference type="NCBI Taxonomy" id="272562"/>
    <lineage>
        <taxon>Bacteria</taxon>
        <taxon>Bacillati</taxon>
        <taxon>Bacillota</taxon>
        <taxon>Clostridia</taxon>
        <taxon>Eubacteriales</taxon>
        <taxon>Clostridiaceae</taxon>
        <taxon>Clostridium</taxon>
    </lineage>
</organism>
<dbReference type="EMBL" id="AE001437">
    <property type="protein sequence ID" value="AAK77997.1"/>
    <property type="molecule type" value="Genomic_DNA"/>
</dbReference>
<dbReference type="PIR" id="B96901">
    <property type="entry name" value="B96901"/>
</dbReference>
<dbReference type="RefSeq" id="NP_346657.1">
    <property type="nucleotide sequence ID" value="NC_003030.1"/>
</dbReference>
<dbReference type="RefSeq" id="WP_010963339.1">
    <property type="nucleotide sequence ID" value="NC_003030.1"/>
</dbReference>
<dbReference type="SMR" id="Q97N28"/>
<dbReference type="STRING" id="272562.CA_C0010"/>
<dbReference type="KEGG" id="cac:CA_C0010"/>
<dbReference type="PATRIC" id="fig|272562.8.peg.189"/>
<dbReference type="eggNOG" id="COG1615">
    <property type="taxonomic scope" value="Bacteria"/>
</dbReference>
<dbReference type="HOGENOM" id="CLU_007733_0_0_9"/>
<dbReference type="OrthoDB" id="9763654at2"/>
<dbReference type="Proteomes" id="UP000000814">
    <property type="component" value="Chromosome"/>
</dbReference>
<dbReference type="GO" id="GO:0005576">
    <property type="term" value="C:extracellular region"/>
    <property type="evidence" value="ECO:0007669"/>
    <property type="project" value="TreeGrafter"/>
</dbReference>
<dbReference type="GO" id="GO:0005886">
    <property type="term" value="C:plasma membrane"/>
    <property type="evidence" value="ECO:0007669"/>
    <property type="project" value="UniProtKB-SubCell"/>
</dbReference>
<dbReference type="HAMAP" id="MF_01600">
    <property type="entry name" value="UPF0182"/>
    <property type="match status" value="1"/>
</dbReference>
<dbReference type="InterPro" id="IPR005372">
    <property type="entry name" value="UPF0182"/>
</dbReference>
<dbReference type="NCBIfam" id="NF000825">
    <property type="entry name" value="PRK00068.1"/>
    <property type="match status" value="1"/>
</dbReference>
<dbReference type="PANTHER" id="PTHR39344">
    <property type="entry name" value="UPF0182 PROTEIN SLL1060"/>
    <property type="match status" value="1"/>
</dbReference>
<dbReference type="PANTHER" id="PTHR39344:SF1">
    <property type="entry name" value="UPF0182 PROTEIN SLL1060"/>
    <property type="match status" value="1"/>
</dbReference>
<dbReference type="Pfam" id="PF03699">
    <property type="entry name" value="UPF0182"/>
    <property type="match status" value="1"/>
</dbReference>
<name>Y010_CLOAB</name>
<feature type="chain" id="PRO_0000157713" description="UPF0182 protein CA_C0010">
    <location>
        <begin position="1"/>
        <end position="906"/>
    </location>
</feature>
<feature type="transmembrane region" description="Helical" evidence="1">
    <location>
        <begin position="7"/>
        <end position="29"/>
    </location>
</feature>
<feature type="transmembrane region" description="Helical" evidence="1">
    <location>
        <begin position="47"/>
        <end position="69"/>
    </location>
</feature>
<feature type="transmembrane region" description="Helical" evidence="1">
    <location>
        <begin position="96"/>
        <end position="118"/>
    </location>
</feature>
<feature type="transmembrane region" description="Helical" evidence="1">
    <location>
        <begin position="153"/>
        <end position="175"/>
    </location>
</feature>
<feature type="transmembrane region" description="Helical" evidence="1">
    <location>
        <begin position="208"/>
        <end position="230"/>
    </location>
</feature>
<feature type="transmembrane region" description="Helical" evidence="1">
    <location>
        <begin position="250"/>
        <end position="272"/>
    </location>
</feature>
<feature type="transmembrane region" description="Helical" evidence="1">
    <location>
        <begin position="279"/>
        <end position="301"/>
    </location>
</feature>
<feature type="region of interest" description="Disordered" evidence="2">
    <location>
        <begin position="842"/>
        <end position="875"/>
    </location>
</feature>
<feature type="compositionally biased region" description="Low complexity" evidence="2">
    <location>
        <begin position="842"/>
        <end position="862"/>
    </location>
</feature>
<comment type="subcellular location">
    <subcellularLocation>
        <location evidence="1">Cell membrane</location>
        <topology evidence="1">Multi-pass membrane protein</topology>
    </subcellularLocation>
</comment>
<comment type="similarity">
    <text evidence="1">Belongs to the UPF0182 family.</text>
</comment>
<gene>
    <name type="ordered locus">CA_C0010</name>
</gene>